<gene>
    <name evidence="1" type="primary">chlL</name>
    <name type="ordered locus">Cyan7425_3939</name>
</gene>
<feature type="chain" id="PRO_1000133437" description="Light-independent protochlorophyllide reductase iron-sulfur ATP-binding protein">
    <location>
        <begin position="1"/>
        <end position="286"/>
    </location>
</feature>
<feature type="binding site" evidence="1">
    <location>
        <begin position="10"/>
        <end position="15"/>
    </location>
    <ligand>
        <name>ATP</name>
        <dbReference type="ChEBI" id="CHEBI:30616"/>
    </ligand>
</feature>
<feature type="binding site" evidence="1">
    <location>
        <position position="14"/>
    </location>
    <ligand>
        <name>Mg(2+)</name>
        <dbReference type="ChEBI" id="CHEBI:18420"/>
    </ligand>
</feature>
<feature type="binding site" evidence="1">
    <location>
        <position position="39"/>
    </location>
    <ligand>
        <name>ATP</name>
        <dbReference type="ChEBI" id="CHEBI:30616"/>
    </ligand>
</feature>
<feature type="binding site" evidence="1">
    <location>
        <position position="95"/>
    </location>
    <ligand>
        <name>[4Fe-4S] cluster</name>
        <dbReference type="ChEBI" id="CHEBI:49883"/>
        <note>ligand shared between dimeric partners</note>
    </ligand>
</feature>
<feature type="binding site" evidence="1">
    <location>
        <position position="129"/>
    </location>
    <ligand>
        <name>[4Fe-4S] cluster</name>
        <dbReference type="ChEBI" id="CHEBI:49883"/>
        <note>ligand shared between dimeric partners</note>
    </ligand>
</feature>
<feature type="binding site" evidence="1">
    <location>
        <begin position="180"/>
        <end position="181"/>
    </location>
    <ligand>
        <name>ATP</name>
        <dbReference type="ChEBI" id="CHEBI:30616"/>
    </ligand>
</feature>
<comment type="function">
    <text evidence="1">Component of the dark-operative protochlorophyllide reductase (DPOR) that uses Mg-ATP and reduced ferredoxin to reduce ring D of protochlorophyllide (Pchlide) to form chlorophyllide a (Chlide). This reaction is light-independent. The L component serves as a unique electron donor to the NB-component of the complex, and binds Mg-ATP.</text>
</comment>
<comment type="catalytic activity">
    <reaction evidence="1">
        <text>chlorophyllide a + oxidized 2[4Fe-4S]-[ferredoxin] + 2 ADP + 2 phosphate = protochlorophyllide a + reduced 2[4Fe-4S]-[ferredoxin] + 2 ATP + 2 H2O</text>
        <dbReference type="Rhea" id="RHEA:28202"/>
        <dbReference type="Rhea" id="RHEA-COMP:10002"/>
        <dbReference type="Rhea" id="RHEA-COMP:10004"/>
        <dbReference type="ChEBI" id="CHEBI:15377"/>
        <dbReference type="ChEBI" id="CHEBI:30616"/>
        <dbReference type="ChEBI" id="CHEBI:33722"/>
        <dbReference type="ChEBI" id="CHEBI:33723"/>
        <dbReference type="ChEBI" id="CHEBI:43474"/>
        <dbReference type="ChEBI" id="CHEBI:83348"/>
        <dbReference type="ChEBI" id="CHEBI:83350"/>
        <dbReference type="ChEBI" id="CHEBI:456216"/>
        <dbReference type="EC" id="1.3.7.7"/>
    </reaction>
</comment>
<comment type="cofactor">
    <cofactor evidence="1">
        <name>[4Fe-4S] cluster</name>
        <dbReference type="ChEBI" id="CHEBI:49883"/>
    </cofactor>
    <text evidence="1">Binds 1 [4Fe-4S] cluster per dimer.</text>
</comment>
<comment type="pathway">
    <text evidence="1">Porphyrin-containing compound metabolism; chlorophyll biosynthesis (light-independent).</text>
</comment>
<comment type="subunit">
    <text evidence="1">Homodimer. Protochlorophyllide reductase is composed of three subunits; ChlL, ChlN and ChlB.</text>
</comment>
<comment type="similarity">
    <text evidence="1">Belongs to the NifH/BchL/ChlL family.</text>
</comment>
<dbReference type="EC" id="1.3.7.7" evidence="1"/>
<dbReference type="EMBL" id="CP001344">
    <property type="protein sequence ID" value="ACL46255.1"/>
    <property type="molecule type" value="Genomic_DNA"/>
</dbReference>
<dbReference type="SMR" id="B8HUQ3"/>
<dbReference type="STRING" id="395961.Cyan7425_3939"/>
<dbReference type="KEGG" id="cyn:Cyan7425_3939"/>
<dbReference type="eggNOG" id="COG1348">
    <property type="taxonomic scope" value="Bacteria"/>
</dbReference>
<dbReference type="HOGENOM" id="CLU_059373_2_0_3"/>
<dbReference type="OrthoDB" id="9778641at2"/>
<dbReference type="UniPathway" id="UPA00670"/>
<dbReference type="GO" id="GO:0051539">
    <property type="term" value="F:4 iron, 4 sulfur cluster binding"/>
    <property type="evidence" value="ECO:0007669"/>
    <property type="project" value="UniProtKB-UniRule"/>
</dbReference>
<dbReference type="GO" id="GO:0005524">
    <property type="term" value="F:ATP binding"/>
    <property type="evidence" value="ECO:0007669"/>
    <property type="project" value="UniProtKB-UniRule"/>
</dbReference>
<dbReference type="GO" id="GO:0046872">
    <property type="term" value="F:metal ion binding"/>
    <property type="evidence" value="ECO:0007669"/>
    <property type="project" value="UniProtKB-KW"/>
</dbReference>
<dbReference type="GO" id="GO:0016730">
    <property type="term" value="F:oxidoreductase activity, acting on iron-sulfur proteins as donors"/>
    <property type="evidence" value="ECO:0007669"/>
    <property type="project" value="InterPro"/>
</dbReference>
<dbReference type="GO" id="GO:0016636">
    <property type="term" value="F:oxidoreductase activity, acting on the CH-CH group of donors, iron-sulfur protein as acceptor"/>
    <property type="evidence" value="ECO:0007669"/>
    <property type="project" value="UniProtKB-UniRule"/>
</dbReference>
<dbReference type="GO" id="GO:0036068">
    <property type="term" value="P:light-independent chlorophyll biosynthetic process"/>
    <property type="evidence" value="ECO:0007669"/>
    <property type="project" value="UniProtKB-UniRule"/>
</dbReference>
<dbReference type="GO" id="GO:0019685">
    <property type="term" value="P:photosynthesis, dark reaction"/>
    <property type="evidence" value="ECO:0007669"/>
    <property type="project" value="InterPro"/>
</dbReference>
<dbReference type="CDD" id="cd02032">
    <property type="entry name" value="Bchl-like"/>
    <property type="match status" value="1"/>
</dbReference>
<dbReference type="Gene3D" id="3.40.50.300">
    <property type="entry name" value="P-loop containing nucleotide triphosphate hydrolases"/>
    <property type="match status" value="1"/>
</dbReference>
<dbReference type="HAMAP" id="MF_00355">
    <property type="entry name" value="ChlL_BchL"/>
    <property type="match status" value="1"/>
</dbReference>
<dbReference type="InterPro" id="IPR030655">
    <property type="entry name" value="NifH/chlL_CS"/>
</dbReference>
<dbReference type="InterPro" id="IPR000392">
    <property type="entry name" value="NifH/frxC"/>
</dbReference>
<dbReference type="InterPro" id="IPR027417">
    <property type="entry name" value="P-loop_NTPase"/>
</dbReference>
<dbReference type="InterPro" id="IPR005971">
    <property type="entry name" value="Protochlorophyllide_ATP-bd"/>
</dbReference>
<dbReference type="NCBIfam" id="TIGR01281">
    <property type="entry name" value="DPOR_bchL"/>
    <property type="match status" value="1"/>
</dbReference>
<dbReference type="PANTHER" id="PTHR42864">
    <property type="entry name" value="LIGHT-INDEPENDENT PROTOCHLOROPHYLLIDE REDUCTASE IRON-SULFUR ATP-BINDING PROTEIN"/>
    <property type="match status" value="1"/>
</dbReference>
<dbReference type="PANTHER" id="PTHR42864:SF2">
    <property type="entry name" value="LIGHT-INDEPENDENT PROTOCHLOROPHYLLIDE REDUCTASE IRON-SULFUR ATP-BINDING PROTEIN"/>
    <property type="match status" value="1"/>
</dbReference>
<dbReference type="Pfam" id="PF00142">
    <property type="entry name" value="Fer4_NifH"/>
    <property type="match status" value="1"/>
</dbReference>
<dbReference type="PIRSF" id="PIRSF000363">
    <property type="entry name" value="Nitrogenase_iron"/>
    <property type="match status" value="1"/>
</dbReference>
<dbReference type="PRINTS" id="PR00091">
    <property type="entry name" value="NITROGNASEII"/>
</dbReference>
<dbReference type="SUPFAM" id="SSF52540">
    <property type="entry name" value="P-loop containing nucleoside triphosphate hydrolases"/>
    <property type="match status" value="1"/>
</dbReference>
<dbReference type="PROSITE" id="PS00746">
    <property type="entry name" value="NIFH_FRXC_1"/>
    <property type="match status" value="1"/>
</dbReference>
<dbReference type="PROSITE" id="PS00692">
    <property type="entry name" value="NIFH_FRXC_2"/>
    <property type="match status" value="1"/>
</dbReference>
<dbReference type="PROSITE" id="PS51026">
    <property type="entry name" value="NIFH_FRXC_3"/>
    <property type="match status" value="1"/>
</dbReference>
<name>CHLL_CYAP4</name>
<organism>
    <name type="scientific">Cyanothece sp. (strain PCC 7425 / ATCC 29141)</name>
    <dbReference type="NCBI Taxonomy" id="395961"/>
    <lineage>
        <taxon>Bacteria</taxon>
        <taxon>Bacillati</taxon>
        <taxon>Cyanobacteriota</taxon>
        <taxon>Cyanophyceae</taxon>
        <taxon>Gomontiellales</taxon>
        <taxon>Cyanothecaceae</taxon>
        <taxon>Cyanothece</taxon>
    </lineage>
</organism>
<reference key="1">
    <citation type="journal article" date="2011" name="MBio">
        <title>Novel metabolic attributes of the genus Cyanothece, comprising a group of unicellular nitrogen-fixing Cyanobacteria.</title>
        <authorList>
            <person name="Bandyopadhyay A."/>
            <person name="Elvitigala T."/>
            <person name="Welsh E."/>
            <person name="Stockel J."/>
            <person name="Liberton M."/>
            <person name="Min H."/>
            <person name="Sherman L.A."/>
            <person name="Pakrasi H.B."/>
        </authorList>
    </citation>
    <scope>NUCLEOTIDE SEQUENCE [LARGE SCALE GENOMIC DNA]</scope>
    <source>
        <strain>PCC 7425 / ATCC 29141</strain>
    </source>
</reference>
<protein>
    <recommendedName>
        <fullName evidence="1">Light-independent protochlorophyllide reductase iron-sulfur ATP-binding protein</fullName>
        <shortName evidence="1">DPOR subunit L</shortName>
        <shortName evidence="1">LI-POR subunit L</shortName>
        <ecNumber evidence="1">1.3.7.7</ecNumber>
    </recommendedName>
</protein>
<evidence type="ECO:0000255" key="1">
    <source>
        <dbReference type="HAMAP-Rule" id="MF_00355"/>
    </source>
</evidence>
<keyword id="KW-0004">4Fe-4S</keyword>
<keyword id="KW-0067">ATP-binding</keyword>
<keyword id="KW-0149">Chlorophyll biosynthesis</keyword>
<keyword id="KW-0408">Iron</keyword>
<keyword id="KW-0411">Iron-sulfur</keyword>
<keyword id="KW-0460">Magnesium</keyword>
<keyword id="KW-0479">Metal-binding</keyword>
<keyword id="KW-0547">Nucleotide-binding</keyword>
<keyword id="KW-0560">Oxidoreductase</keyword>
<keyword id="KW-0602">Photosynthesis</keyword>
<proteinExistence type="inferred from homology"/>
<accession>B8HUQ3</accession>
<sequence length="286" mass="31193">MKLAVYGKGGIGKSTTSCNISVALARRGKKVLQIGCDPKHDSTFTLTGFLIPTIIDTLQSKDYHYENVWPEDVIYKGYGGVDCVEAGGPPAGAGCGGYVVGETVKLLKELNAFDEYDVILFDVLGDVVCGGFAAPLNYADYCLIVTDNGFDALFAANRIAASVREKARTHVLRLAGLIGNRTAKRDLIDKYVEAVPMPVLEILPLIEDIRVSRVKGKTLFEMAESDPSLNYVCDYYLNIADQILARPEGVVPQGAPDRDLFALLSDFYLNPAPNKVEQEDLELMMV</sequence>